<protein>
    <recommendedName>
        <fullName>Elastin-binding protein EbpS</fullName>
    </recommendedName>
</protein>
<gene>
    <name type="primary">ebpS</name>
    <name type="ordered locus">NWMN_1389</name>
</gene>
<evidence type="ECO:0000250" key="1"/>
<evidence type="ECO:0000255" key="2"/>
<evidence type="ECO:0000255" key="3">
    <source>
        <dbReference type="PROSITE-ProRule" id="PRU01118"/>
    </source>
</evidence>
<evidence type="ECO:0000256" key="4">
    <source>
        <dbReference type="SAM" id="MobiDB-lite"/>
    </source>
</evidence>
<evidence type="ECO:0000269" key="5">
    <source>
    </source>
</evidence>
<evidence type="ECO:0000269" key="6">
    <source>
    </source>
</evidence>
<sequence length="486" mass="53221">MSNNFKDDFEKNRQSIDTNSHQDHTEDVEKDQSELEHQDTIENTEQQFPPRNAQRRKRRRDLATNHNKQVHNESQTSEDNVQNEAGTIDDRQVESSHSTESQEPSHQDSTPQHEEEYYNKNAFAMDKSHPEPIEDNDKHDTIKNAENNTEHSTVSDKSEAEQSQQPKPYFTTGANQSETSKNEHDNDSVKQDQDEPKEHHNGKKAAAIGAGTAGVAGAAGAMAASKAKKHSNDAQNKSNSGKANNSTEDKASQDKSKDHHNGKKGAAIGAGTAGLAGGAASKSASAASKPHASNNASQNHDEHDNHDRDKERKKGGMAKVLLPLIAAVLIIGALAIFGGMALNNHNNGTKENKIANTNKNNADESKDKDTSKDASKDKSKSTDSDKSKEDQDKATKDESDNDQNNANQANNQAQNNQNQQQANQNQQQQQQRQGGGQRHTVNGQENLYRIAIQYYGSGSPENVEKIRRANGLSGNNIRNGQQIVIP</sequence>
<feature type="initiator methionine" description="Removed" evidence="1">
    <location>
        <position position="1"/>
    </location>
</feature>
<feature type="chain" id="PRO_0000324103" description="Elastin-binding protein EbpS">
    <location>
        <begin position="2"/>
        <end position="486"/>
    </location>
</feature>
<feature type="transmembrane region" description="Helical" evidence="2">
    <location>
        <begin position="320"/>
        <end position="340"/>
    </location>
</feature>
<feature type="domain" description="LysM" evidence="3">
    <location>
        <begin position="437"/>
        <end position="485"/>
    </location>
</feature>
<feature type="region of interest" description="Disordered" evidence="4">
    <location>
        <begin position="1"/>
        <end position="314"/>
    </location>
</feature>
<feature type="region of interest" description="Elastin-binding" evidence="1">
    <location>
        <begin position="14"/>
        <end position="34"/>
    </location>
</feature>
<feature type="region of interest" description="Disordered" evidence="4">
    <location>
        <begin position="351"/>
        <end position="440"/>
    </location>
</feature>
<feature type="compositionally biased region" description="Basic and acidic residues" evidence="4">
    <location>
        <begin position="1"/>
        <end position="40"/>
    </location>
</feature>
<feature type="compositionally biased region" description="Polar residues" evidence="4">
    <location>
        <begin position="64"/>
        <end position="85"/>
    </location>
</feature>
<feature type="compositionally biased region" description="Basic and acidic residues" evidence="4">
    <location>
        <begin position="103"/>
        <end position="118"/>
    </location>
</feature>
<feature type="compositionally biased region" description="Basic and acidic residues" evidence="4">
    <location>
        <begin position="126"/>
        <end position="143"/>
    </location>
</feature>
<feature type="compositionally biased region" description="Polar residues" evidence="4">
    <location>
        <begin position="161"/>
        <end position="179"/>
    </location>
</feature>
<feature type="compositionally biased region" description="Basic and acidic residues" evidence="4">
    <location>
        <begin position="180"/>
        <end position="199"/>
    </location>
</feature>
<feature type="compositionally biased region" description="Low complexity" evidence="4">
    <location>
        <begin position="204"/>
        <end position="225"/>
    </location>
</feature>
<feature type="compositionally biased region" description="Polar residues" evidence="4">
    <location>
        <begin position="233"/>
        <end position="246"/>
    </location>
</feature>
<feature type="compositionally biased region" description="Basic and acidic residues" evidence="4">
    <location>
        <begin position="247"/>
        <end position="259"/>
    </location>
</feature>
<feature type="compositionally biased region" description="Low complexity" evidence="4">
    <location>
        <begin position="278"/>
        <end position="297"/>
    </location>
</feature>
<feature type="compositionally biased region" description="Basic and acidic residues" evidence="4">
    <location>
        <begin position="299"/>
        <end position="314"/>
    </location>
</feature>
<feature type="compositionally biased region" description="Basic and acidic residues" evidence="4">
    <location>
        <begin position="361"/>
        <end position="398"/>
    </location>
</feature>
<feature type="compositionally biased region" description="Low complexity" evidence="4">
    <location>
        <begin position="403"/>
        <end position="431"/>
    </location>
</feature>
<accession>A6QH29</accession>
<reference key="1">
    <citation type="journal article" date="2008" name="J. Bacteriol.">
        <title>Genome sequence of Staphylococcus aureus strain Newman and comparative analysis of staphylococcal genomes: polymorphism and evolution of two major pathogenicity islands.</title>
        <authorList>
            <person name="Baba T."/>
            <person name="Bae T."/>
            <person name="Schneewind O."/>
            <person name="Takeuchi F."/>
            <person name="Hiramatsu K."/>
        </authorList>
    </citation>
    <scope>NUCLEOTIDE SEQUENCE [LARGE SCALE GENOMIC DNA]</scope>
    <source>
        <strain>Newman</strain>
    </source>
</reference>
<reference key="2">
    <citation type="journal article" date="2002" name="J. Biol. Chem.">
        <title>The elastin-binding protein of Staphylococcus aureus (EbpS) is expressed at the cell surface as an integral membrane protein and not as a cell-wall associated protein.</title>
        <authorList>
            <person name="Downer R."/>
            <person name="Roche F.M."/>
            <person name="Park P.W."/>
            <person name="Mecham R.P."/>
            <person name="Foster T.J."/>
        </authorList>
    </citation>
    <scope>FUNCTION IN ELASTIN BINDING</scope>
    <scope>SUBCELLULAR LOCATION</scope>
</reference>
<reference key="3">
    <citation type="journal article" date="2004" name="J. Biol. Chem.">
        <title>The N-terminal A domain of fibronectin-binding proteins A and B promotes adhesion of Staphylococcus aureus to elastin.</title>
        <authorList>
            <person name="Roche F.M."/>
            <person name="Downer R."/>
            <person name="Keane F."/>
            <person name="Speziale P."/>
            <person name="Park P.W."/>
            <person name="Foster T.J."/>
        </authorList>
    </citation>
    <scope>FUNCTION</scope>
</reference>
<comment type="function">
    <text evidence="5 6">Promotes binding of soluble elastin peptides and tropoelastin to S.aureus cells although it is not able to promote bacterial adherence to immobilized elastin and, therefore, is not a microbial surface component recognizing adhesive matrix molecule (MSCRAMM).</text>
</comment>
<comment type="subcellular location">
    <subcellularLocation>
        <location evidence="5">Cell membrane</location>
        <topology evidence="5">Single-pass membrane protein</topology>
    </subcellularLocation>
</comment>
<comment type="domain">
    <text evidence="1">The elastin-binding domain is located between residues 13-33 at the surface-exposed N-terminus, whereas the C-terminus, containing the LysM peptidoglycan-binding domain, is not exposed on the surface of intact cells and presumably remains buried within the peptidoglycan. The presence of the TNSHQD sequence, corresponding to residues 18-23, is essential for EbpS activity but not sufficient, additional flanking amino acids in the amino- or carboxy-terminal are required for elastin recognition (By similarity).</text>
</comment>
<proteinExistence type="evidence at protein level"/>
<keyword id="KW-1003">Cell membrane</keyword>
<keyword id="KW-0472">Membrane</keyword>
<keyword id="KW-0812">Transmembrane</keyword>
<keyword id="KW-1133">Transmembrane helix</keyword>
<dbReference type="EMBL" id="AP009351">
    <property type="protein sequence ID" value="BAF67661.1"/>
    <property type="molecule type" value="Genomic_DNA"/>
</dbReference>
<dbReference type="RefSeq" id="WP_000069282.1">
    <property type="nucleotide sequence ID" value="NZ_JBBIAE010000001.1"/>
</dbReference>
<dbReference type="SMR" id="A6QH29"/>
<dbReference type="KEGG" id="sae:NWMN_1389"/>
<dbReference type="HOGENOM" id="CLU_043950_0_0_9"/>
<dbReference type="PRO" id="PR:A6QH29"/>
<dbReference type="Proteomes" id="UP000006386">
    <property type="component" value="Chromosome"/>
</dbReference>
<dbReference type="GO" id="GO:0005886">
    <property type="term" value="C:plasma membrane"/>
    <property type="evidence" value="ECO:0007669"/>
    <property type="project" value="UniProtKB-SubCell"/>
</dbReference>
<dbReference type="CDD" id="cd00118">
    <property type="entry name" value="LysM"/>
    <property type="match status" value="1"/>
</dbReference>
<dbReference type="Gene3D" id="3.10.350.10">
    <property type="entry name" value="LysM domain"/>
    <property type="match status" value="1"/>
</dbReference>
<dbReference type="InterPro" id="IPR018392">
    <property type="entry name" value="LysM_dom"/>
</dbReference>
<dbReference type="InterPro" id="IPR036779">
    <property type="entry name" value="LysM_dom_sf"/>
</dbReference>
<dbReference type="NCBIfam" id="NF033598">
    <property type="entry name" value="elast_bind_EbpS"/>
    <property type="match status" value="1"/>
</dbReference>
<dbReference type="Pfam" id="PF01476">
    <property type="entry name" value="LysM"/>
    <property type="match status" value="1"/>
</dbReference>
<dbReference type="SMART" id="SM00257">
    <property type="entry name" value="LysM"/>
    <property type="match status" value="1"/>
</dbReference>
<dbReference type="SUPFAM" id="SSF54106">
    <property type="entry name" value="LysM domain"/>
    <property type="match status" value="1"/>
</dbReference>
<dbReference type="PROSITE" id="PS51782">
    <property type="entry name" value="LYSM"/>
    <property type="match status" value="1"/>
</dbReference>
<name>EBPS_STAAE</name>
<organism>
    <name type="scientific">Staphylococcus aureus (strain Newman)</name>
    <dbReference type="NCBI Taxonomy" id="426430"/>
    <lineage>
        <taxon>Bacteria</taxon>
        <taxon>Bacillati</taxon>
        <taxon>Bacillota</taxon>
        <taxon>Bacilli</taxon>
        <taxon>Bacillales</taxon>
        <taxon>Staphylococcaceae</taxon>
        <taxon>Staphylococcus</taxon>
    </lineage>
</organism>